<dbReference type="EMBL" id="AC016662">
    <property type="status" value="NOT_ANNOTATED_CDS"/>
    <property type="molecule type" value="Genomic_DNA"/>
</dbReference>
<dbReference type="EMBL" id="CP002684">
    <property type="protein sequence ID" value="AEE35532.1"/>
    <property type="molecule type" value="Genomic_DNA"/>
</dbReference>
<dbReference type="EMBL" id="BT011710">
    <property type="protein sequence ID" value="AAS49073.1"/>
    <property type="molecule type" value="mRNA"/>
</dbReference>
<dbReference type="EMBL" id="AK220675">
    <property type="protein sequence ID" value="BAD93725.1"/>
    <property type="molecule type" value="mRNA"/>
</dbReference>
<dbReference type="RefSeq" id="NP_683493.1">
    <property type="nucleotide sequence ID" value="NM_148652.3"/>
</dbReference>
<dbReference type="STRING" id="3702.Q6NMF0"/>
<dbReference type="GlyCosmos" id="Q6NMF0">
    <property type="glycosylation" value="2 sites, No reported glycans"/>
</dbReference>
<dbReference type="GlyGen" id="Q6NMF0">
    <property type="glycosylation" value="1 site"/>
</dbReference>
<dbReference type="PaxDb" id="3702-AT1G73965.1"/>
<dbReference type="EnsemblPlants" id="AT1G73965.1">
    <property type="protein sequence ID" value="AT1G73965.1"/>
    <property type="gene ID" value="AT1G73965"/>
</dbReference>
<dbReference type="GeneID" id="843734"/>
<dbReference type="Gramene" id="AT1G73965.1">
    <property type="protein sequence ID" value="AT1G73965.1"/>
    <property type="gene ID" value="AT1G73965"/>
</dbReference>
<dbReference type="KEGG" id="ath:AT1G73965"/>
<dbReference type="Araport" id="AT1G73965"/>
<dbReference type="TAIR" id="AT1G73965">
    <property type="gene designation" value="CLE13"/>
</dbReference>
<dbReference type="eggNOG" id="ENOG502S8TY">
    <property type="taxonomic scope" value="Eukaryota"/>
</dbReference>
<dbReference type="HOGENOM" id="CLU_145048_0_0_1"/>
<dbReference type="InParanoid" id="Q6NMF0"/>
<dbReference type="OMA" id="DFTPFMK"/>
<dbReference type="PhylomeDB" id="Q6NMF0"/>
<dbReference type="PRO" id="PR:Q6NMF0"/>
<dbReference type="Proteomes" id="UP000006548">
    <property type="component" value="Chromosome 1"/>
</dbReference>
<dbReference type="ExpressionAtlas" id="Q6NMF0">
    <property type="expression patterns" value="baseline and differential"/>
</dbReference>
<dbReference type="GO" id="GO:0048046">
    <property type="term" value="C:apoplast"/>
    <property type="evidence" value="ECO:0000250"/>
    <property type="project" value="UniProtKB"/>
</dbReference>
<dbReference type="GO" id="GO:0033612">
    <property type="term" value="F:receptor serine/threonine kinase binding"/>
    <property type="evidence" value="ECO:0000250"/>
    <property type="project" value="UniProtKB"/>
</dbReference>
<dbReference type="GO" id="GO:0045168">
    <property type="term" value="P:cell-cell signaling involved in cell fate commitment"/>
    <property type="evidence" value="ECO:0000250"/>
    <property type="project" value="UniProtKB"/>
</dbReference>
<dbReference type="GO" id="GO:0010078">
    <property type="term" value="P:maintenance of root meristem identity"/>
    <property type="evidence" value="ECO:0000314"/>
    <property type="project" value="UniProtKB"/>
</dbReference>
<dbReference type="GO" id="GO:0010088">
    <property type="term" value="P:phloem development"/>
    <property type="evidence" value="ECO:0000314"/>
    <property type="project" value="UniProtKB"/>
</dbReference>
<dbReference type="GO" id="GO:0045595">
    <property type="term" value="P:regulation of cell differentiation"/>
    <property type="evidence" value="ECO:0000314"/>
    <property type="project" value="UniProtKB"/>
</dbReference>
<dbReference type="InterPro" id="IPR039618">
    <property type="entry name" value="CLE9-13"/>
</dbReference>
<dbReference type="PANTHER" id="PTHR34359">
    <property type="entry name" value="CLAVATA3/ESR (CLE)-RELATED PROTEIN 10"/>
    <property type="match status" value="1"/>
</dbReference>
<dbReference type="PANTHER" id="PTHR34359:SF27">
    <property type="entry name" value="CLAVATA3_ESR (CLE)-RELATED PROTEIN 11-RELATED"/>
    <property type="match status" value="1"/>
</dbReference>
<name>CLE13_ARATH</name>
<keyword id="KW-0217">Developmental protein</keyword>
<keyword id="KW-0221">Differentiation</keyword>
<keyword id="KW-0325">Glycoprotein</keyword>
<keyword id="KW-0379">Hydroxylation</keyword>
<keyword id="KW-1185">Reference proteome</keyword>
<keyword id="KW-0964">Secreted</keyword>
<keyword id="KW-0732">Signal</keyword>
<feature type="signal peptide" evidence="2">
    <location>
        <begin position="1"/>
        <end position="25"/>
    </location>
</feature>
<feature type="chain" id="PRO_0000401257" description="CLAVATA3/ESR (CLE)-related protein 13">
    <location>
        <begin position="26"/>
        <end position="107"/>
    </location>
</feature>
<feature type="peptide" id="PRO_0000401258" description="CLE13p" evidence="1">
    <location>
        <begin position="96"/>
        <end position="107"/>
    </location>
</feature>
<feature type="region of interest" description="Disordered" evidence="4">
    <location>
        <begin position="79"/>
        <end position="107"/>
    </location>
</feature>
<feature type="compositionally biased region" description="Basic and acidic residues" evidence="4">
    <location>
        <begin position="87"/>
        <end position="97"/>
    </location>
</feature>
<feature type="modified residue" description="Hydroxyproline" evidence="1">
    <location>
        <position position="99"/>
    </location>
</feature>
<feature type="modified residue" description="Hydroxyproline" evidence="1">
    <location>
        <position position="102"/>
    </location>
</feature>
<feature type="glycosylation site" description="N-linked (GlcNAc...) asparagine" evidence="3">
    <location>
        <position position="29"/>
    </location>
</feature>
<feature type="glycosylation site" description="O-linked (Ara...) hydroxyproline" evidence="1">
    <location>
        <position position="102"/>
    </location>
</feature>
<evidence type="ECO:0000250" key="1">
    <source>
        <dbReference type="UniProtKB" id="O49519"/>
    </source>
</evidence>
<evidence type="ECO:0000255" key="2"/>
<evidence type="ECO:0000255" key="3">
    <source>
        <dbReference type="PROSITE-ProRule" id="PRU00498"/>
    </source>
</evidence>
<evidence type="ECO:0000256" key="4">
    <source>
        <dbReference type="SAM" id="MobiDB-lite"/>
    </source>
</evidence>
<evidence type="ECO:0000269" key="5">
    <source>
    </source>
</evidence>
<evidence type="ECO:0000269" key="6">
    <source>
    </source>
</evidence>
<evidence type="ECO:0000269" key="7">
    <source>
    </source>
</evidence>
<evidence type="ECO:0000269" key="8">
    <source>
    </source>
</evidence>
<evidence type="ECO:0000269" key="9">
    <source>
    </source>
</evidence>
<evidence type="ECO:0000303" key="10">
    <source>
    </source>
</evidence>
<evidence type="ECO:0000305" key="11"/>
<evidence type="ECO:0000312" key="12">
    <source>
        <dbReference type="Araport" id="AT1G73965"/>
    </source>
</evidence>
<evidence type="ECO:0000312" key="13">
    <source>
        <dbReference type="EMBL" id="AC016662"/>
    </source>
</evidence>
<accession>Q6NMF0</accession>
<comment type="function">
    <molecule>CLE13p</molecule>
    <text evidence="6 7 8 9">Extracellular signal peptide that regulates cell fate. Represses root apical meristem maintenance. Regulates the transition of protophloem cells from proliferation to differentiation, thus impinging on postembryonic growth capacity of the root meristem; this signaling pathway requires CRN and CLV2 (PubMed:28607033).</text>
</comment>
<comment type="subcellular location">
    <molecule>CLE13p</molecule>
    <subcellularLocation>
        <location evidence="1">Secreted</location>
        <location evidence="1">Extracellular space</location>
    </subcellularLocation>
</comment>
<comment type="tissue specificity">
    <molecule>CLE13p</molecule>
    <text evidence="5">Mostly expressed in seedlings, roots, flowers, stems and apex, and, to a lower extent, in leaves and siliques.</text>
</comment>
<comment type="PTM">
    <molecule>CLE13p</molecule>
    <text evidence="1">The O-glycosylation (arabinosylation) of the hydroxyproline Pro-102 enhances binding affinity of the CLE13p peptide for its receptor.</text>
</comment>
<comment type="similarity">
    <text evidence="11">Belongs to the CLV3/ESR signal peptide family.</text>
</comment>
<gene>
    <name evidence="10" type="primary">CLE13</name>
    <name evidence="12" type="ordered locus">At1g73965</name>
    <name evidence="13" type="ORF">F2P9</name>
</gene>
<proteinExistence type="evidence at transcript level"/>
<organism>
    <name type="scientific">Arabidopsis thaliana</name>
    <name type="common">Mouse-ear cress</name>
    <dbReference type="NCBI Taxonomy" id="3702"/>
    <lineage>
        <taxon>Eukaryota</taxon>
        <taxon>Viridiplantae</taxon>
        <taxon>Streptophyta</taxon>
        <taxon>Embryophyta</taxon>
        <taxon>Tracheophyta</taxon>
        <taxon>Spermatophyta</taxon>
        <taxon>Magnoliopsida</taxon>
        <taxon>eudicotyledons</taxon>
        <taxon>Gunneridae</taxon>
        <taxon>Pentapetalae</taxon>
        <taxon>rosids</taxon>
        <taxon>malvids</taxon>
        <taxon>Brassicales</taxon>
        <taxon>Brassicaceae</taxon>
        <taxon>Camelineae</taxon>
        <taxon>Arabidopsis</taxon>
    </lineage>
</organism>
<sequence>MATTRVSHVLGFLLWISLLIFVSIGLFGNFSSKPINPFPSPVITLPALYYRPGRRALAVKTFDFTPFLKDLRRSNHRKALPAGGSEIDPRYGVEKRLVPSGPNPLHH</sequence>
<protein>
    <recommendedName>
        <fullName evidence="10">CLAVATA3/ESR (CLE)-related protein 13</fullName>
    </recommendedName>
    <component>
        <recommendedName>
            <fullName evidence="10">CLE13p</fullName>
        </recommendedName>
    </component>
</protein>
<reference key="1">
    <citation type="journal article" date="2000" name="Nature">
        <title>Sequence and analysis of chromosome 1 of the plant Arabidopsis thaliana.</title>
        <authorList>
            <person name="Theologis A."/>
            <person name="Ecker J.R."/>
            <person name="Palm C.J."/>
            <person name="Federspiel N.A."/>
            <person name="Kaul S."/>
            <person name="White O."/>
            <person name="Alonso J."/>
            <person name="Altafi H."/>
            <person name="Araujo R."/>
            <person name="Bowman C.L."/>
            <person name="Brooks S.Y."/>
            <person name="Buehler E."/>
            <person name="Chan A."/>
            <person name="Chao Q."/>
            <person name="Chen H."/>
            <person name="Cheuk R.F."/>
            <person name="Chin C.W."/>
            <person name="Chung M.K."/>
            <person name="Conn L."/>
            <person name="Conway A.B."/>
            <person name="Conway A.R."/>
            <person name="Creasy T.H."/>
            <person name="Dewar K."/>
            <person name="Dunn P."/>
            <person name="Etgu P."/>
            <person name="Feldblyum T.V."/>
            <person name="Feng J.-D."/>
            <person name="Fong B."/>
            <person name="Fujii C.Y."/>
            <person name="Gill J.E."/>
            <person name="Goldsmith A.D."/>
            <person name="Haas B."/>
            <person name="Hansen N.F."/>
            <person name="Hughes B."/>
            <person name="Huizar L."/>
            <person name="Hunter J.L."/>
            <person name="Jenkins J."/>
            <person name="Johnson-Hopson C."/>
            <person name="Khan S."/>
            <person name="Khaykin E."/>
            <person name="Kim C.J."/>
            <person name="Koo H.L."/>
            <person name="Kremenetskaia I."/>
            <person name="Kurtz D.B."/>
            <person name="Kwan A."/>
            <person name="Lam B."/>
            <person name="Langin-Hooper S."/>
            <person name="Lee A."/>
            <person name="Lee J.M."/>
            <person name="Lenz C.A."/>
            <person name="Li J.H."/>
            <person name="Li Y.-P."/>
            <person name="Lin X."/>
            <person name="Liu S.X."/>
            <person name="Liu Z.A."/>
            <person name="Luros J.S."/>
            <person name="Maiti R."/>
            <person name="Marziali A."/>
            <person name="Militscher J."/>
            <person name="Miranda M."/>
            <person name="Nguyen M."/>
            <person name="Nierman W.C."/>
            <person name="Osborne B.I."/>
            <person name="Pai G."/>
            <person name="Peterson J."/>
            <person name="Pham P.K."/>
            <person name="Rizzo M."/>
            <person name="Rooney T."/>
            <person name="Rowley D."/>
            <person name="Sakano H."/>
            <person name="Salzberg S.L."/>
            <person name="Schwartz J.R."/>
            <person name="Shinn P."/>
            <person name="Southwick A.M."/>
            <person name="Sun H."/>
            <person name="Tallon L.J."/>
            <person name="Tambunga G."/>
            <person name="Toriumi M.J."/>
            <person name="Town C.D."/>
            <person name="Utterback T."/>
            <person name="Van Aken S."/>
            <person name="Vaysberg M."/>
            <person name="Vysotskaia V.S."/>
            <person name="Walker M."/>
            <person name="Wu D."/>
            <person name="Yu G."/>
            <person name="Fraser C.M."/>
            <person name="Venter J.C."/>
            <person name="Davis R.W."/>
        </authorList>
    </citation>
    <scope>NUCLEOTIDE SEQUENCE [LARGE SCALE GENOMIC DNA]</scope>
    <source>
        <strain>cv. Columbia</strain>
    </source>
</reference>
<reference key="2">
    <citation type="journal article" date="2017" name="Plant J.">
        <title>Araport11: a complete reannotation of the Arabidopsis thaliana reference genome.</title>
        <authorList>
            <person name="Cheng C.Y."/>
            <person name="Krishnakumar V."/>
            <person name="Chan A.P."/>
            <person name="Thibaud-Nissen F."/>
            <person name="Schobel S."/>
            <person name="Town C.D."/>
        </authorList>
    </citation>
    <scope>GENOME REANNOTATION</scope>
    <source>
        <strain>cv. Columbia</strain>
    </source>
</reference>
<reference key="3">
    <citation type="submission" date="2004-03" db="EMBL/GenBank/DDBJ databases">
        <title>Arabidopsis ORF clones.</title>
        <authorList>
            <person name="Cheuk R.F."/>
            <person name="Chen H."/>
            <person name="Kim C.J."/>
            <person name="Shinn P."/>
            <person name="Carninci P."/>
            <person name="Hayashizaki Y."/>
            <person name="Ishida J."/>
            <person name="Kamiya A."/>
            <person name="Kawai J."/>
            <person name="Narusaka M."/>
            <person name="Sakurai T."/>
            <person name="Satou M."/>
            <person name="Seki M."/>
            <person name="Shinozaki K."/>
            <person name="Ecker J.R."/>
        </authorList>
    </citation>
    <scope>NUCLEOTIDE SEQUENCE [LARGE SCALE MRNA]</scope>
    <source>
        <strain>cv. Columbia</strain>
    </source>
</reference>
<reference key="4">
    <citation type="submission" date="2005-03" db="EMBL/GenBank/DDBJ databases">
        <title>Large-scale analysis of RIKEN Arabidopsis full-length (RAFL) cDNAs.</title>
        <authorList>
            <person name="Totoki Y."/>
            <person name="Seki M."/>
            <person name="Ishida J."/>
            <person name="Nakajima M."/>
            <person name="Enju A."/>
            <person name="Kamiya A."/>
            <person name="Narusaka M."/>
            <person name="Shin-i T."/>
            <person name="Nakagawa M."/>
            <person name="Sakamoto N."/>
            <person name="Oishi K."/>
            <person name="Kohara Y."/>
            <person name="Kobayashi M."/>
            <person name="Toyoda A."/>
            <person name="Sakaki Y."/>
            <person name="Sakurai T."/>
            <person name="Iida K."/>
            <person name="Akiyama K."/>
            <person name="Satou M."/>
            <person name="Toyoda T."/>
            <person name="Konagaya A."/>
            <person name="Carninci P."/>
            <person name="Kawai J."/>
            <person name="Hayashizaki Y."/>
            <person name="Shinozaki K."/>
        </authorList>
    </citation>
    <scope>NUCLEOTIDE SEQUENCE [LARGE SCALE MRNA]</scope>
    <source>
        <strain>cv. Columbia</strain>
    </source>
</reference>
<reference key="5">
    <citation type="journal article" date="2001" name="Plant Physiol.">
        <title>A large family of genes that share homology with CLAVATA3.</title>
        <authorList>
            <person name="Cock J.M."/>
            <person name="McCormick S."/>
        </authorList>
    </citation>
    <scope>GENE FAMILY</scope>
    <scope>NOMENCLATURE</scope>
</reference>
<reference key="6">
    <citation type="journal article" date="2003" name="Plant Mol. Biol.">
        <title>The Arabidopsis CLV3-like (CLE) genes are expressed in diverse tissues and encode secreted proteins.</title>
        <authorList>
            <person name="Sharma V.K."/>
            <person name="Ramirez J."/>
            <person name="Fletcher J.C."/>
        </authorList>
    </citation>
    <scope>TISSUE SPECIFICITY</scope>
</reference>
<reference key="7">
    <citation type="journal article" date="2006" name="Plant Physiol.">
        <title>Evidence for functional conservation, sufficiency, and proteolytic processing of the CLAVATA3 CLE domain.</title>
        <authorList>
            <person name="Ni J."/>
            <person name="Clark S.E."/>
        </authorList>
    </citation>
    <scope>FUNCTION</scope>
</reference>
<reference key="8">
    <citation type="journal article" date="2006" name="Plant Physiol.">
        <title>Gain-of-function phenotypes of many CLAVATA3/ESR genes, including four new family members, correlate with tandem variations in the conserved CLAVATA3/ESR domain.</title>
        <authorList>
            <person name="Strabala T.J."/>
            <person name="O'donnell P.J."/>
            <person name="Smit A.-M."/>
            <person name="Ampomah-Dwamena C."/>
            <person name="Martin E.J."/>
            <person name="Netzler N."/>
            <person name="Nieuwenhuizen N.J."/>
            <person name="Quinn B.D."/>
            <person name="Foote H.C.C."/>
            <person name="Hudson K.R."/>
        </authorList>
    </citation>
    <scope>FUNCTION</scope>
    <scope>GENE FAMILY</scope>
</reference>
<reference key="9">
    <citation type="journal article" date="2006" name="Science">
        <title>Dodeca-CLE peptides as suppressors of plant stem cell differentiation.</title>
        <authorList>
            <person name="Ito Y."/>
            <person name="Nakanomyo I."/>
            <person name="Motose H."/>
            <person name="Iwamoto K."/>
            <person name="Sawa S."/>
            <person name="Dohmae N."/>
            <person name="Fukuda H."/>
        </authorList>
    </citation>
    <scope>FUNCTION</scope>
</reference>
<reference key="10">
    <citation type="journal article" date="2008" name="Cell. Mol. Life Sci.">
        <title>The CLE family of plant polypeptide signaling molecules.</title>
        <authorList>
            <person name="Jun J.H."/>
            <person name="Fiume E."/>
            <person name="Fletcher J.C."/>
        </authorList>
    </citation>
    <scope>REVIEW</scope>
</reference>
<reference key="11">
    <citation type="journal article" date="2008" name="Curr. Opin. Plant Biol.">
        <title>Diverse and conserved roles of CLE peptides.</title>
        <authorList>
            <person name="Mitchum M.G."/>
            <person name="Wang X."/>
            <person name="Davis E.L."/>
        </authorList>
    </citation>
    <scope>REVIEW</scope>
</reference>
<reference key="12">
    <citation type="journal article" date="2010" name="Protoplasma">
        <title>CLE peptide signaling during plant development.</title>
        <authorList>
            <person name="Wang G."/>
            <person name="Fiers M."/>
        </authorList>
    </citation>
    <scope>REVIEW</scope>
</reference>
<reference key="13">
    <citation type="journal article" date="2017" name="EMBO Rep.">
        <title>Perception of root-active CLE peptides requires CORYNE function in the phloem vasculature.</title>
        <authorList>
            <person name="Hazak O."/>
            <person name="Brandt B."/>
            <person name="Cattaneo P."/>
            <person name="Santiago J."/>
            <person name="Rodriguez-Villalon A."/>
            <person name="Hothorn M."/>
            <person name="Hardtke C.S."/>
        </authorList>
    </citation>
    <scope>FUNCTION</scope>
    <source>
        <strain>cv. Columbia</strain>
    </source>
</reference>